<reference key="1">
    <citation type="journal article" date="1995" name="Biosci. Biotechnol. Biochem.">
        <title>Purification of a chitooligosaccharidolytic beta-N-acetylglucosaminidase from Bombyx mori larvae during metamorphosis and the nucleotide sequence of its cDNA.</title>
        <authorList>
            <person name="Nagamatsu Y."/>
            <person name="Yanagisawa I."/>
            <person name="Kimoto M."/>
            <person name="Okamoto E."/>
            <person name="Koga D."/>
        </authorList>
    </citation>
    <scope>NUCLEOTIDE SEQUENCE [MRNA]</scope>
    <scope>PARTIAL PROTEIN SEQUENCE</scope>
    <source>
        <strain>Kinshu X Showa</strain>
    </source>
</reference>
<comment type="function">
    <text>Active during metamorphosis to degrade chitin.</text>
</comment>
<comment type="catalytic activity">
    <reaction>
        <text>Hydrolysis of terminal non-reducing N-acetyl-D-hexosamine residues in N-acetyl-beta-D-hexosaminides.</text>
        <dbReference type="EC" id="3.2.1.52"/>
    </reaction>
</comment>
<comment type="similarity">
    <text evidence="2">Belongs to the glycosyl hydrolase 20 family.</text>
</comment>
<organism>
    <name type="scientific">Bombyx mori</name>
    <name type="common">Silk moth</name>
    <dbReference type="NCBI Taxonomy" id="7091"/>
    <lineage>
        <taxon>Eukaryota</taxon>
        <taxon>Metazoa</taxon>
        <taxon>Ecdysozoa</taxon>
        <taxon>Arthropoda</taxon>
        <taxon>Hexapoda</taxon>
        <taxon>Insecta</taxon>
        <taxon>Pterygota</taxon>
        <taxon>Neoptera</taxon>
        <taxon>Endopterygota</taxon>
        <taxon>Lepidoptera</taxon>
        <taxon>Glossata</taxon>
        <taxon>Ditrysia</taxon>
        <taxon>Bombycoidea</taxon>
        <taxon>Bombycidae</taxon>
        <taxon>Bombycinae</taxon>
        <taxon>Bombyx</taxon>
    </lineage>
</organism>
<name>HEXC_BOMMO</name>
<accession>P49010</accession>
<proteinExistence type="evidence at protein level"/>
<keyword id="KW-0119">Carbohydrate metabolism</keyword>
<keyword id="KW-0146">Chitin degradation</keyword>
<keyword id="KW-0903">Direct protein sequencing</keyword>
<keyword id="KW-0325">Glycoprotein</keyword>
<keyword id="KW-0326">Glycosidase</keyword>
<keyword id="KW-0378">Hydrolase</keyword>
<keyword id="KW-0624">Polysaccharide degradation</keyword>
<keyword id="KW-1185">Reference proteome</keyword>
<keyword id="KW-0732">Signal</keyword>
<sequence>MWLQAICIYTVFIIIGCGIPTAAEEHSLWRWTCENNRCTKIRNEPENKEPVLSLEACKMFCDDYGLLWPKPTIETNLGNFLSKINMNTIDIQITKQGKSDDLLTAAADRFKTLVSSSVPKGFSAKAAGKSVTVYLVNENPYIREFSLDMDESYELYISSTSSDKVNATIRGNSFFGVRNGLETLSQLIVYDDIRNNLLIVRDVTIKDRPVYPYRGILLDTARNFYSIDSIKRTIDAMAAVKLNTFHWHITDSQSFPLVLQKRPNLSKLGAYSPTKVYTKQDIREVVEYGLERGVRVLPEFDAPAHVGEGWQDTGLTVCFKAEPWTKFCVEPPCGQLNPTKEELYDYLEDIYVEMAEAFESTDMFHMGGDEVSERCWNSSEEIQNFMIQNRWNLDKSSFLKLWNYFQKNAQDRAYKAFGKRLPLILWTSTLTDYTHVEKFLDKDEYIIQVWTTGADPQIQGLLQKGYRLIMSNYDALYFDCGFGAWVGSGNNWCSPYIGGQKVYGNSPAVMALSYRDQILGGEVALWSEQSDPATLDGRLWPRAAAFAERMWAEPSTAWQDAEHRMLHVRERLVRMGIQAESLEPEWCYQNQGLCYG</sequence>
<dbReference type="EC" id="3.2.1.52"/>
<dbReference type="EMBL" id="S77548">
    <property type="protein sequence ID" value="AAC60521.1"/>
    <property type="molecule type" value="mRNA"/>
</dbReference>
<dbReference type="PIR" id="JC2539">
    <property type="entry name" value="JC2539"/>
</dbReference>
<dbReference type="RefSeq" id="NP_001037466.1">
    <property type="nucleotide sequence ID" value="NM_001044001.1"/>
</dbReference>
<dbReference type="SMR" id="P49010"/>
<dbReference type="FunCoup" id="P49010">
    <property type="interactions" value="373"/>
</dbReference>
<dbReference type="STRING" id="7091.P49010"/>
<dbReference type="CAZy" id="GH20">
    <property type="family name" value="Glycoside Hydrolase Family 20"/>
</dbReference>
<dbReference type="PaxDb" id="7091-BGIBMGA005899-TA"/>
<dbReference type="GeneID" id="693032"/>
<dbReference type="KEGG" id="bmor:693032"/>
<dbReference type="eggNOG" id="KOG2499">
    <property type="taxonomic scope" value="Eukaryota"/>
</dbReference>
<dbReference type="HOGENOM" id="CLU_007082_0_1_1"/>
<dbReference type="InParanoid" id="P49010"/>
<dbReference type="BRENDA" id="3.2.1.52">
    <property type="organism ID" value="890"/>
</dbReference>
<dbReference type="Proteomes" id="UP000005204">
    <property type="component" value="Unassembled WGS sequence"/>
</dbReference>
<dbReference type="GO" id="GO:0005886">
    <property type="term" value="C:plasma membrane"/>
    <property type="evidence" value="ECO:0007669"/>
    <property type="project" value="TreeGrafter"/>
</dbReference>
<dbReference type="GO" id="GO:0016231">
    <property type="term" value="F:beta-N-acetylglucosaminidase activity"/>
    <property type="evidence" value="ECO:0007669"/>
    <property type="project" value="TreeGrafter"/>
</dbReference>
<dbReference type="GO" id="GO:0004563">
    <property type="term" value="F:beta-N-acetylhexosaminidase activity"/>
    <property type="evidence" value="ECO:0000314"/>
    <property type="project" value="UniProtKB"/>
</dbReference>
<dbReference type="GO" id="GO:0006032">
    <property type="term" value="P:chitin catabolic process"/>
    <property type="evidence" value="ECO:0000314"/>
    <property type="project" value="UniProtKB"/>
</dbReference>
<dbReference type="GO" id="GO:0030203">
    <property type="term" value="P:glycosaminoglycan metabolic process"/>
    <property type="evidence" value="ECO:0007669"/>
    <property type="project" value="TreeGrafter"/>
</dbReference>
<dbReference type="GO" id="GO:0000272">
    <property type="term" value="P:polysaccharide catabolic process"/>
    <property type="evidence" value="ECO:0007669"/>
    <property type="project" value="UniProtKB-KW"/>
</dbReference>
<dbReference type="CDD" id="cd06562">
    <property type="entry name" value="GH20_HexA_HexB-like"/>
    <property type="match status" value="1"/>
</dbReference>
<dbReference type="FunFam" id="3.20.20.80:FF:000063">
    <property type="entry name" value="Beta-hexosaminidase"/>
    <property type="match status" value="1"/>
</dbReference>
<dbReference type="Gene3D" id="3.30.379.10">
    <property type="entry name" value="Chitobiase/beta-hexosaminidase domain 2-like"/>
    <property type="match status" value="1"/>
</dbReference>
<dbReference type="Gene3D" id="3.20.20.80">
    <property type="entry name" value="Glycosidases"/>
    <property type="match status" value="1"/>
</dbReference>
<dbReference type="InterPro" id="IPR025705">
    <property type="entry name" value="Beta_hexosaminidase_sua/sub"/>
</dbReference>
<dbReference type="InterPro" id="IPR015883">
    <property type="entry name" value="Glyco_hydro_20_cat"/>
</dbReference>
<dbReference type="InterPro" id="IPR017853">
    <property type="entry name" value="Glycoside_hydrolase_SF"/>
</dbReference>
<dbReference type="InterPro" id="IPR029018">
    <property type="entry name" value="Hex-like_dom2"/>
</dbReference>
<dbReference type="InterPro" id="IPR029019">
    <property type="entry name" value="HEX_eukaryotic_N"/>
</dbReference>
<dbReference type="PANTHER" id="PTHR22600">
    <property type="entry name" value="BETA-HEXOSAMINIDASE"/>
    <property type="match status" value="1"/>
</dbReference>
<dbReference type="PANTHER" id="PTHR22600:SF26">
    <property type="entry name" value="BETA-N-ACETYLHEXOSAMINIDASE"/>
    <property type="match status" value="1"/>
</dbReference>
<dbReference type="Pfam" id="PF00728">
    <property type="entry name" value="Glyco_hydro_20"/>
    <property type="match status" value="1"/>
</dbReference>
<dbReference type="Pfam" id="PF14845">
    <property type="entry name" value="Glycohydro_20b2"/>
    <property type="match status" value="1"/>
</dbReference>
<dbReference type="PIRSF" id="PIRSF001093">
    <property type="entry name" value="B-hxosamndse_ab_euk"/>
    <property type="match status" value="1"/>
</dbReference>
<dbReference type="PRINTS" id="PR00738">
    <property type="entry name" value="GLHYDRLASE20"/>
</dbReference>
<dbReference type="SUPFAM" id="SSF51445">
    <property type="entry name" value="(Trans)glycosidases"/>
    <property type="match status" value="1"/>
</dbReference>
<dbReference type="SUPFAM" id="SSF55545">
    <property type="entry name" value="beta-N-acetylhexosaminidase-like domain"/>
    <property type="match status" value="1"/>
</dbReference>
<protein>
    <recommendedName>
        <fullName>Chitooligosaccharidolytic beta-N-acetylglucosaminidase</fullName>
        <ecNumber>3.2.1.52</ecNumber>
    </recommendedName>
    <alternativeName>
        <fullName>Beta-GlcNAcase</fullName>
    </alternativeName>
    <alternativeName>
        <fullName>Beta-N-acetylhexosaminidase</fullName>
    </alternativeName>
    <alternativeName>
        <fullName>Beta-hexosaminidase</fullName>
    </alternativeName>
</protein>
<feature type="signal peptide" evidence="1">
    <location>
        <begin position="1"/>
        <end position="23"/>
    </location>
</feature>
<feature type="chain" id="PRO_0000012013" description="Chitooligosaccharidolytic beta-N-acetylglucosaminidase">
    <location>
        <begin position="24"/>
        <end position="596"/>
    </location>
</feature>
<feature type="glycosylation site" description="N-linked (GlcNAc...) asparagine" evidence="1">
    <location>
        <position position="166"/>
    </location>
</feature>
<feature type="glycosylation site" description="N-linked (GlcNAc...) asparagine" evidence="1">
    <location>
        <position position="264"/>
    </location>
</feature>
<feature type="glycosylation site" description="N-linked (GlcNAc...) asparagine" evidence="1">
    <location>
        <position position="377"/>
    </location>
</feature>
<evidence type="ECO:0000255" key="1"/>
<evidence type="ECO:0000305" key="2"/>